<proteinExistence type="inferred from homology"/>
<gene>
    <name evidence="2" type="primary">rex</name>
    <name type="ordered locus">SPCG_1188</name>
</gene>
<comment type="function">
    <text evidence="1 2">Modulates transcription in response to changes in cellular NADH/NAD(+) redox state (By similarity). Binds to the promoter of the aldehyde-alcohol dehydrogenase adhE gene. Functions as a redox-dependent repressor of adhE expression (By similarity).</text>
</comment>
<comment type="subunit">
    <text evidence="2">Homodimer.</text>
</comment>
<comment type="subcellular location">
    <subcellularLocation>
        <location evidence="2">Cytoplasm</location>
    </subcellularLocation>
</comment>
<comment type="similarity">
    <text evidence="2">Belongs to the transcriptional regulatory Rex family.</text>
</comment>
<protein>
    <recommendedName>
        <fullName evidence="2">Redox-sensing transcriptional repressor Rex</fullName>
    </recommendedName>
</protein>
<accession>B2IQ16</accession>
<feature type="chain" id="PRO_1000137335" description="Redox-sensing transcriptional repressor Rex">
    <location>
        <begin position="1"/>
        <end position="213"/>
    </location>
</feature>
<feature type="DNA-binding region" description="H-T-H motif" evidence="2">
    <location>
        <begin position="18"/>
        <end position="57"/>
    </location>
</feature>
<feature type="binding site" evidence="2">
    <location>
        <begin position="92"/>
        <end position="97"/>
    </location>
    <ligand>
        <name>NAD(+)</name>
        <dbReference type="ChEBI" id="CHEBI:57540"/>
    </ligand>
</feature>
<name>REX_STRPS</name>
<evidence type="ECO:0000250" key="1">
    <source>
        <dbReference type="UniProtKB" id="Q04KJ6"/>
    </source>
</evidence>
<evidence type="ECO:0000255" key="2">
    <source>
        <dbReference type="HAMAP-Rule" id="MF_01131"/>
    </source>
</evidence>
<keyword id="KW-0963">Cytoplasm</keyword>
<keyword id="KW-0238">DNA-binding</keyword>
<keyword id="KW-0520">NAD</keyword>
<keyword id="KW-0678">Repressor</keyword>
<keyword id="KW-0804">Transcription</keyword>
<keyword id="KW-0805">Transcription regulation</keyword>
<reference key="1">
    <citation type="journal article" date="2009" name="BMC Genomics">
        <title>Genome evolution driven by host adaptations results in a more virulent and antimicrobial-resistant Streptococcus pneumoniae serotype 14.</title>
        <authorList>
            <person name="Ding F."/>
            <person name="Tang P."/>
            <person name="Hsu M.-H."/>
            <person name="Cui P."/>
            <person name="Hu S."/>
            <person name="Yu J."/>
            <person name="Chiu C.-H."/>
        </authorList>
    </citation>
    <scope>NUCLEOTIDE SEQUENCE [LARGE SCALE GENOMIC DNA]</scope>
    <source>
        <strain>CGSP14</strain>
    </source>
</reference>
<dbReference type="EMBL" id="CP001033">
    <property type="protein sequence ID" value="ACB90440.1"/>
    <property type="molecule type" value="Genomic_DNA"/>
</dbReference>
<dbReference type="RefSeq" id="WP_000653403.1">
    <property type="nucleotide sequence ID" value="NC_010582.1"/>
</dbReference>
<dbReference type="SMR" id="B2IQ16"/>
<dbReference type="KEGG" id="spw:SPCG_1188"/>
<dbReference type="HOGENOM" id="CLU_061534_1_1_9"/>
<dbReference type="GO" id="GO:0005737">
    <property type="term" value="C:cytoplasm"/>
    <property type="evidence" value="ECO:0007669"/>
    <property type="project" value="UniProtKB-SubCell"/>
</dbReference>
<dbReference type="GO" id="GO:0003677">
    <property type="term" value="F:DNA binding"/>
    <property type="evidence" value="ECO:0007669"/>
    <property type="project" value="UniProtKB-UniRule"/>
</dbReference>
<dbReference type="GO" id="GO:0003700">
    <property type="term" value="F:DNA-binding transcription factor activity"/>
    <property type="evidence" value="ECO:0007669"/>
    <property type="project" value="UniProtKB-UniRule"/>
</dbReference>
<dbReference type="GO" id="GO:0045892">
    <property type="term" value="P:negative regulation of DNA-templated transcription"/>
    <property type="evidence" value="ECO:0007669"/>
    <property type="project" value="InterPro"/>
</dbReference>
<dbReference type="GO" id="GO:0051775">
    <property type="term" value="P:response to redox state"/>
    <property type="evidence" value="ECO:0007669"/>
    <property type="project" value="InterPro"/>
</dbReference>
<dbReference type="Gene3D" id="3.40.50.720">
    <property type="entry name" value="NAD(P)-binding Rossmann-like Domain"/>
    <property type="match status" value="1"/>
</dbReference>
<dbReference type="Gene3D" id="1.10.10.10">
    <property type="entry name" value="Winged helix-like DNA-binding domain superfamily/Winged helix DNA-binding domain"/>
    <property type="match status" value="1"/>
</dbReference>
<dbReference type="HAMAP" id="MF_01131">
    <property type="entry name" value="Rex"/>
    <property type="match status" value="1"/>
</dbReference>
<dbReference type="InterPro" id="IPR003781">
    <property type="entry name" value="CoA-bd"/>
</dbReference>
<dbReference type="InterPro" id="IPR036291">
    <property type="entry name" value="NAD(P)-bd_dom_sf"/>
</dbReference>
<dbReference type="InterPro" id="IPR009718">
    <property type="entry name" value="Rex_DNA-bd_C_dom"/>
</dbReference>
<dbReference type="InterPro" id="IPR022876">
    <property type="entry name" value="Tscrpt_rep_Rex"/>
</dbReference>
<dbReference type="InterPro" id="IPR036388">
    <property type="entry name" value="WH-like_DNA-bd_sf"/>
</dbReference>
<dbReference type="InterPro" id="IPR036390">
    <property type="entry name" value="WH_DNA-bd_sf"/>
</dbReference>
<dbReference type="NCBIfam" id="NF003988">
    <property type="entry name" value="PRK05472.1-1"/>
    <property type="match status" value="1"/>
</dbReference>
<dbReference type="NCBIfam" id="NF003989">
    <property type="entry name" value="PRK05472.1-3"/>
    <property type="match status" value="1"/>
</dbReference>
<dbReference type="NCBIfam" id="NF003991">
    <property type="entry name" value="PRK05472.1-5"/>
    <property type="match status" value="1"/>
</dbReference>
<dbReference type="NCBIfam" id="NF003994">
    <property type="entry name" value="PRK05472.2-3"/>
    <property type="match status" value="1"/>
</dbReference>
<dbReference type="NCBIfam" id="NF003995">
    <property type="entry name" value="PRK05472.2-4"/>
    <property type="match status" value="1"/>
</dbReference>
<dbReference type="NCBIfam" id="NF003996">
    <property type="entry name" value="PRK05472.2-5"/>
    <property type="match status" value="1"/>
</dbReference>
<dbReference type="PANTHER" id="PTHR35786">
    <property type="entry name" value="REDOX-SENSING TRANSCRIPTIONAL REPRESSOR REX"/>
    <property type="match status" value="1"/>
</dbReference>
<dbReference type="PANTHER" id="PTHR35786:SF1">
    <property type="entry name" value="REDOX-SENSING TRANSCRIPTIONAL REPRESSOR REX 1"/>
    <property type="match status" value="1"/>
</dbReference>
<dbReference type="Pfam" id="PF02629">
    <property type="entry name" value="CoA_binding"/>
    <property type="match status" value="1"/>
</dbReference>
<dbReference type="Pfam" id="PF06971">
    <property type="entry name" value="Put_DNA-bind_N"/>
    <property type="match status" value="1"/>
</dbReference>
<dbReference type="SMART" id="SM00881">
    <property type="entry name" value="CoA_binding"/>
    <property type="match status" value="1"/>
</dbReference>
<dbReference type="SUPFAM" id="SSF51735">
    <property type="entry name" value="NAD(P)-binding Rossmann-fold domains"/>
    <property type="match status" value="1"/>
</dbReference>
<dbReference type="SUPFAM" id="SSF46785">
    <property type="entry name" value="Winged helix' DNA-binding domain"/>
    <property type="match status" value="1"/>
</dbReference>
<sequence length="213" mass="24165">MKDKQFAIPKATAKRLSLYYRIFKRFHAEKIERANSKQIAEAIGIDSATVRRDFSYFGELGRRGFGYDVKKLMTFFADLLNDNSITNVMLVGIGNMGHALLHYRFHERNKMKIIMAFDLDDHPEVGTQTPDGIPIYGISQIKDKIKDADVKTAILTVPSVKSQEVANLLVDAGVKGILSFSPVHLHLPKDVVVQYVDLTSELQTLLYFMRKED</sequence>
<organism>
    <name type="scientific">Streptococcus pneumoniae (strain CGSP14)</name>
    <dbReference type="NCBI Taxonomy" id="516950"/>
    <lineage>
        <taxon>Bacteria</taxon>
        <taxon>Bacillati</taxon>
        <taxon>Bacillota</taxon>
        <taxon>Bacilli</taxon>
        <taxon>Lactobacillales</taxon>
        <taxon>Streptococcaceae</taxon>
        <taxon>Streptococcus</taxon>
    </lineage>
</organism>